<sequence>MDLLSGTYIFAVLLACVVFHSGAQEKNYTIREEMPENVLIGDLLKDLNLSLIPNKSLTTAMQFKLVYKTGDVPLIRIEEDTGEIFTTGARIDREKLCAGIPRDEHCFYEVEVAILPDEIFRLVKIRFLIEDINDNAPLFPATVINISIPENSAINSKYTLPAAVDPDVGTNGVQNYELIKSQNIFGLDVIETPEGDKMPQLIVQKELDREEKDTYVMKVKVEDGGFPQRSSTAILQVSVTDTNDNHPVFKETEIEVSIPENAPVGTSVTQLHATDADIGENAKIHFSFSNLVSNIARRLFHLNATTGLITIKEPLDREETPNHKLLVLASDGGLMPARAMVLVNVTDVNDNVPSIDIRYIVNPVNDTVVLSENIPLNTKIALITVTDKDADHNGRVTCFTDHEIPFRLRPVFSNQFLLETAAYLDYESTKEYAIKLLAADAGKPPLNQSAMLFIKVKDENDNAPVFTQSFVTVSIPENNSPGIQLTKVSATDADSGPNAEINYLLGPDAPPEFSLDRRTGMLTVVKKLDREKEDKYLFTILAKDNGVPPLTSNVTVFVSIIDQNDNSPVFTHNEYNFYVPENLPRHGTVGLITVTDPDYGDNSAVTLSILDENDDFTIDSQTGVIRPNISFDREKQESYTFYVKAEDGGRVSRSSSAKVTINVVDVNDNKPVFIVPPSNYSYELVLPSTNPGTVVFQVMAVDNDTGMNAEVRYSIVGGNTRDLFAIDQETGNITLMEKCDVTDLGLHRVLVKANDLGQPDSLFSVVIVNLFVNESVTNATLINELVRKSTEAPVTPNTEIADVSSPTSDYVKILVAAVAGTITVVVVIFITAVVRCRQAPHLKAAQKNKQNSEWATPNPENRQMIMMKKRKKKKKHSPKNLLLNFVTIEETKADDVDSDGNRVTLDLPIDLEEQTMGKYNWVTTPTTFKPDSPDLARHYKSASPQPAFQIQPETPLNSKHHIIQELPLDNTFVACDSISKCSSSSSDPYSVSDCGYPVTTFEVPVSVHTRPPMKEVVRSCTPMKESTTMEIWIHPQPQRKSEGKVAGKSQRRVTFHLPEGSQESSSDGGLGDHDAGSLTSTSHGLPLGYPQEEYFDRATPSNRTEGDGNSDPESTFIPGLKKAAEITVQPTVEEASDNCTQECLIYGHSDACWMPASLDHSSSSQAQASALCHSPPLSQASTQHHSPPVTQTIALCHSPPVTQTIALCHSPPPIQVSALHHSPPLVQATALHHSPPSAQASALCYSPPLAQAAAISHSSPLPQVIALHRSQAQSSVSLQQGWVQGADGLCSVDQGVQGSATSQFYTVSERLHPSDDSIKVIPLTTFTPRQQARPSRGDSPVMEEHPL</sequence>
<name>PC11X_PANPA</name>
<keyword id="KW-0025">Alternative splicing</keyword>
<keyword id="KW-0106">Calcium</keyword>
<keyword id="KW-0130">Cell adhesion</keyword>
<keyword id="KW-1003">Cell membrane</keyword>
<keyword id="KW-0325">Glycoprotein</keyword>
<keyword id="KW-0472">Membrane</keyword>
<keyword id="KW-1185">Reference proteome</keyword>
<keyword id="KW-0677">Repeat</keyword>
<keyword id="KW-0732">Signal</keyword>
<keyword id="KW-0812">Transmembrane</keyword>
<keyword id="KW-1133">Transmembrane helix</keyword>
<comment type="function">
    <text evidence="1">Potential calcium-dependent cell-adhesion protein.</text>
</comment>
<comment type="subcellular location">
    <subcellularLocation>
        <location evidence="5">Cell membrane</location>
        <topology evidence="5">Single-pass type I membrane protein</topology>
    </subcellularLocation>
</comment>
<comment type="alternative products">
    <event type="alternative splicing"/>
    <isoform>
        <id>Q6WYY1-1</id>
        <name>1</name>
        <sequence type="displayed"/>
    </isoform>
    <isoform>
        <id>Q6WYY1-2</id>
        <name>2</name>
        <sequence type="described" ref="VSP_017992 VSP_017993"/>
    </isoform>
</comment>
<dbReference type="EMBL" id="AY264487">
    <property type="protein sequence ID" value="AAR04488.1"/>
    <property type="molecule type" value="Genomic_DNA"/>
</dbReference>
<dbReference type="EMBL" id="AY264485">
    <property type="protein sequence ID" value="AAR04488.1"/>
    <property type="status" value="JOINED"/>
    <property type="molecule type" value="Genomic_DNA"/>
</dbReference>
<dbReference type="EMBL" id="AY264486">
    <property type="protein sequence ID" value="AAR04488.1"/>
    <property type="status" value="JOINED"/>
    <property type="molecule type" value="Genomic_DNA"/>
</dbReference>
<dbReference type="EMBL" id="AY264492">
    <property type="protein sequence ID" value="AAR04489.1"/>
    <property type="molecule type" value="Genomic_DNA"/>
</dbReference>
<dbReference type="EMBL" id="AY264485">
    <property type="protein sequence ID" value="AAR04489.1"/>
    <property type="status" value="JOINED"/>
    <property type="molecule type" value="Genomic_DNA"/>
</dbReference>
<dbReference type="EMBL" id="AY264486">
    <property type="protein sequence ID" value="AAR04489.1"/>
    <property type="status" value="JOINED"/>
    <property type="molecule type" value="Genomic_DNA"/>
</dbReference>
<dbReference type="EMBL" id="AY264489">
    <property type="protein sequence ID" value="AAR04489.1"/>
    <property type="status" value="JOINED"/>
    <property type="molecule type" value="Genomic_DNA"/>
</dbReference>
<dbReference type="EMBL" id="AY264491">
    <property type="protein sequence ID" value="AAR04489.1"/>
    <property type="status" value="JOINED"/>
    <property type="molecule type" value="Genomic_DNA"/>
</dbReference>
<dbReference type="EMBL" id="AY264490">
    <property type="protein sequence ID" value="AAR04489.1"/>
    <property type="status" value="JOINED"/>
    <property type="molecule type" value="Genomic_DNA"/>
</dbReference>
<dbReference type="EMBL" id="AY264488">
    <property type="protein sequence ID" value="AAR04489.1"/>
    <property type="status" value="JOINED"/>
    <property type="molecule type" value="Genomic_DNA"/>
</dbReference>
<dbReference type="SMR" id="Q6WYY1"/>
<dbReference type="STRING" id="9597.ENSPPAP00000041678"/>
<dbReference type="GlyCosmos" id="Q6WYY1">
    <property type="glycosylation" value="6 sites, No reported glycans"/>
</dbReference>
<dbReference type="eggNOG" id="ENOG502QPMK">
    <property type="taxonomic scope" value="Eukaryota"/>
</dbReference>
<dbReference type="Proteomes" id="UP000240080">
    <property type="component" value="Unplaced"/>
</dbReference>
<dbReference type="GO" id="GO:0005886">
    <property type="term" value="C:plasma membrane"/>
    <property type="evidence" value="ECO:0007669"/>
    <property type="project" value="UniProtKB-SubCell"/>
</dbReference>
<dbReference type="GO" id="GO:0005509">
    <property type="term" value="F:calcium ion binding"/>
    <property type="evidence" value="ECO:0007669"/>
    <property type="project" value="InterPro"/>
</dbReference>
<dbReference type="GO" id="GO:0007156">
    <property type="term" value="P:homophilic cell adhesion via plasma membrane adhesion molecules"/>
    <property type="evidence" value="ECO:0007669"/>
    <property type="project" value="InterPro"/>
</dbReference>
<dbReference type="CDD" id="cd11304">
    <property type="entry name" value="Cadherin_repeat"/>
    <property type="match status" value="5"/>
</dbReference>
<dbReference type="FunFam" id="2.60.40.60:FF:000005">
    <property type="entry name" value="Protocadherin 9"/>
    <property type="match status" value="2"/>
</dbReference>
<dbReference type="FunFam" id="2.60.40.60:FF:000016">
    <property type="entry name" value="Protocadherin 9"/>
    <property type="match status" value="1"/>
</dbReference>
<dbReference type="FunFam" id="2.60.40.60:FF:000030">
    <property type="entry name" value="Protocadherin 9"/>
    <property type="match status" value="1"/>
</dbReference>
<dbReference type="FunFam" id="2.60.40.60:FF:000036">
    <property type="entry name" value="Protocadherin 9"/>
    <property type="match status" value="1"/>
</dbReference>
<dbReference type="FunFam" id="2.60.40.60:FF:000069">
    <property type="entry name" value="Protocadherin-11 X-linked"/>
    <property type="match status" value="1"/>
</dbReference>
<dbReference type="FunFam" id="2.60.40.60:FF:000077">
    <property type="entry name" value="Protocadherin-11 X-linked"/>
    <property type="match status" value="1"/>
</dbReference>
<dbReference type="Gene3D" id="2.60.40.60">
    <property type="entry name" value="Cadherins"/>
    <property type="match status" value="7"/>
</dbReference>
<dbReference type="InterPro" id="IPR002126">
    <property type="entry name" value="Cadherin-like_dom"/>
</dbReference>
<dbReference type="InterPro" id="IPR015919">
    <property type="entry name" value="Cadherin-like_sf"/>
</dbReference>
<dbReference type="InterPro" id="IPR020894">
    <property type="entry name" value="Cadherin_CS"/>
</dbReference>
<dbReference type="InterPro" id="IPR013164">
    <property type="entry name" value="Cadherin_N"/>
</dbReference>
<dbReference type="InterPro" id="IPR013585">
    <property type="entry name" value="Protocadherin"/>
</dbReference>
<dbReference type="InterPro" id="IPR050174">
    <property type="entry name" value="Protocadherin/Cadherin-CA"/>
</dbReference>
<dbReference type="PANTHER" id="PTHR24028">
    <property type="entry name" value="CADHERIN-87A"/>
    <property type="match status" value="1"/>
</dbReference>
<dbReference type="PANTHER" id="PTHR24028:SF254">
    <property type="entry name" value="PROTOCADHERIN-11 X-LINKED-RELATED"/>
    <property type="match status" value="1"/>
</dbReference>
<dbReference type="Pfam" id="PF00028">
    <property type="entry name" value="Cadherin"/>
    <property type="match status" value="6"/>
</dbReference>
<dbReference type="Pfam" id="PF08266">
    <property type="entry name" value="Cadherin_2"/>
    <property type="match status" value="1"/>
</dbReference>
<dbReference type="Pfam" id="PF08374">
    <property type="entry name" value="Protocadherin"/>
    <property type="match status" value="1"/>
</dbReference>
<dbReference type="PRINTS" id="PR00205">
    <property type="entry name" value="CADHERIN"/>
</dbReference>
<dbReference type="SMART" id="SM00112">
    <property type="entry name" value="CA"/>
    <property type="match status" value="6"/>
</dbReference>
<dbReference type="SUPFAM" id="SSF49313">
    <property type="entry name" value="Cadherin-like"/>
    <property type="match status" value="6"/>
</dbReference>
<dbReference type="PROSITE" id="PS00232">
    <property type="entry name" value="CADHERIN_1"/>
    <property type="match status" value="5"/>
</dbReference>
<dbReference type="PROSITE" id="PS50268">
    <property type="entry name" value="CADHERIN_2"/>
    <property type="match status" value="7"/>
</dbReference>
<gene>
    <name type="primary">PCDH11X</name>
    <name type="synonym">PCDH11</name>
    <name type="synonym">PCDHX</name>
</gene>
<protein>
    <recommendedName>
        <fullName>Protocadherin-11 X-linked</fullName>
        <shortName>Protocadherin-11</shortName>
    </recommendedName>
    <alternativeName>
        <fullName>Protocadherin on the X chromosome</fullName>
        <shortName>PCDH-X</shortName>
    </alternativeName>
</protein>
<reference key="1">
    <citation type="submission" date="2003-03" db="EMBL/GenBank/DDBJ databases">
        <title>Protocadherin X/Y, a neural cell surface adhesion molecule subject to differential and domain-specific selection in the course of hominid evolution.</title>
        <authorList>
            <person name="Williams N.A."/>
            <person name="Crow T.J."/>
        </authorList>
    </citation>
    <scope>NUCLEOTIDE SEQUENCE [GENOMIC DNA]</scope>
</reference>
<proteinExistence type="inferred from homology"/>
<organism>
    <name type="scientific">Pan paniscus</name>
    <name type="common">Pygmy chimpanzee</name>
    <name type="synonym">Bonobo</name>
    <dbReference type="NCBI Taxonomy" id="9597"/>
    <lineage>
        <taxon>Eukaryota</taxon>
        <taxon>Metazoa</taxon>
        <taxon>Chordata</taxon>
        <taxon>Craniata</taxon>
        <taxon>Vertebrata</taxon>
        <taxon>Euteleostomi</taxon>
        <taxon>Mammalia</taxon>
        <taxon>Eutheria</taxon>
        <taxon>Euarchontoglires</taxon>
        <taxon>Primates</taxon>
        <taxon>Haplorrhini</taxon>
        <taxon>Catarrhini</taxon>
        <taxon>Hominidae</taxon>
        <taxon>Pan</taxon>
    </lineage>
</organism>
<accession>Q6WYY1</accession>
<accession>Q6WYY2</accession>
<evidence type="ECO:0000250" key="1"/>
<evidence type="ECO:0000255" key="2"/>
<evidence type="ECO:0000255" key="3">
    <source>
        <dbReference type="PROSITE-ProRule" id="PRU00043"/>
    </source>
</evidence>
<evidence type="ECO:0000256" key="4">
    <source>
        <dbReference type="SAM" id="MobiDB-lite"/>
    </source>
</evidence>
<evidence type="ECO:0000305" key="5"/>
<feature type="signal peptide" evidence="2">
    <location>
        <begin position="1"/>
        <end position="23"/>
    </location>
</feature>
<feature type="chain" id="PRO_0000232761" description="Protocadherin-11 X-linked">
    <location>
        <begin position="24"/>
        <end position="1347"/>
    </location>
</feature>
<feature type="topological domain" description="Extracellular" evidence="2">
    <location>
        <begin position="24"/>
        <end position="812"/>
    </location>
</feature>
<feature type="transmembrane region" description="Helical" evidence="2">
    <location>
        <begin position="813"/>
        <end position="833"/>
    </location>
</feature>
<feature type="topological domain" description="Cytoplasmic" evidence="2">
    <location>
        <begin position="834"/>
        <end position="1347"/>
    </location>
</feature>
<feature type="domain" description="Cadherin 1" evidence="3">
    <location>
        <begin position="26"/>
        <end position="139"/>
    </location>
</feature>
<feature type="domain" description="Cadherin 2" evidence="3">
    <location>
        <begin position="140"/>
        <end position="249"/>
    </location>
</feature>
<feature type="domain" description="Cadherin 3" evidence="3">
    <location>
        <begin position="250"/>
        <end position="355"/>
    </location>
</feature>
<feature type="domain" description="Cadherin 4" evidence="3">
    <location>
        <begin position="362"/>
        <end position="466"/>
    </location>
</feature>
<feature type="domain" description="Cadherin 5" evidence="3">
    <location>
        <begin position="467"/>
        <end position="570"/>
    </location>
</feature>
<feature type="domain" description="Cadherin 6" evidence="3">
    <location>
        <begin position="571"/>
        <end position="673"/>
    </location>
</feature>
<feature type="domain" description="Cadherin 7" evidence="3">
    <location>
        <begin position="677"/>
        <end position="795"/>
    </location>
</feature>
<feature type="region of interest" description="Disordered" evidence="4">
    <location>
        <begin position="1057"/>
        <end position="1091"/>
    </location>
</feature>
<feature type="region of interest" description="Disordered" evidence="4">
    <location>
        <begin position="1097"/>
        <end position="1116"/>
    </location>
</feature>
<feature type="region of interest" description="Disordered" evidence="4">
    <location>
        <begin position="1325"/>
        <end position="1347"/>
    </location>
</feature>
<feature type="glycosylation site" description="N-linked (GlcNAc...) asparagine" evidence="2">
    <location>
        <position position="27"/>
    </location>
</feature>
<feature type="glycosylation site" description="N-linked (GlcNAc...) asparagine" evidence="2">
    <location>
        <position position="48"/>
    </location>
</feature>
<feature type="glycosylation site" description="N-linked (GlcNAc...) asparagine" evidence="2">
    <location>
        <position position="54"/>
    </location>
</feature>
<feature type="glycosylation site" description="N-linked (GlcNAc...) asparagine" evidence="2">
    <location>
        <position position="344"/>
    </location>
</feature>
<feature type="glycosylation site" description="N-linked (GlcNAc...) asparagine" evidence="2">
    <location>
        <position position="553"/>
    </location>
</feature>
<feature type="glycosylation site" description="N-linked (GlcNAc...) asparagine" evidence="2">
    <location>
        <position position="773"/>
    </location>
</feature>
<feature type="splice variant" id="VSP_017992" description="In isoform 2." evidence="5">
    <original>PMKEVVRSCTPMKE</original>
    <variation>TDSRTSTIEICSEI</variation>
    <location>
        <begin position="1012"/>
        <end position="1025"/>
    </location>
</feature>
<feature type="splice variant" id="VSP_017993" description="In isoform 2." evidence="5">
    <location>
        <begin position="1026"/>
        <end position="1347"/>
    </location>
</feature>